<sequence length="987" mass="112913">MVSKSDQLLIVVSILEGRHFPKRPKHMLIVEAKFDGEQLATDPVDHTDQPEFATELAWEIDRKALHQHRLQRTPIKLQCFALDPSTSARETIGYIVLDLRTAQETKQAPKWYQLLSNKYTKFKSEIQISIALETDTKAPVDSFKAKGAPPRDGKVPASLSGLDPKDIVAVLNEEGGYHQIGPAGYCTDFFIMSVTIAFATQLEQLIPCTMKLPERQPEFFFYYSLLGNDVTNEPFSDLINPNFEPERASVRIRSSIEILRVYLTLHSKLQIHLCCGDQSLGSTEIPLTGLLKKGSTEINHRPVTVEGAFTLDPPNRAKQKLAPIPVELAPTVGVSVALQREGMDVQSLIELKTQNEHEPHHSKKRVLTPIKENTHTGPQSPSESPVPPHNQSPPTKDDATESEVESLLYDKDTKLNPKAISSSVPALLAKPVTTSIASEAASGQKIAVPATSHHFCFSIDLRSIHDLEVGFPINCILRYSYPFFGSAAPIMTNPPVEVRKNMEVFLPQSYCAFDFATLPHQLQDTFLRIPLLVELWHKDKMSKDLLLGIARIQLSNILSSEKTRFLGSNGEQCWRQTFSESVPIVATQGSNNRIVDLSYTVTLEDYGLVKMREIFVSDSSQGLSAVQQKPSSVPPAPCPSEIQTEPRETLEYKAALELEMWKEMQEDIFENQLKQKELAHMQALAEEWKKRDRERESLVKKKVAEYNILEGKLQKTLIDLEKREQQLAIAESELQRERRELKSERERNLQELQDSIRRAKEDCVHQVELERLKMKQLEEDKHRLQQQLNDAENKYKTLEKEFHQFKDQQSSKPEIRLQSEINLLTLEKVELERKLESATKSKLHYKQQWGRALKELARLKQREQESQMARLKKQQEELEQMRLRYLAAEEKDTVKTERQELLDIRNELNRLRQQEQKQYPDSREIASGKMDGPHGSALEEGLDDYLTRLIEERDTLMRTGVYNHEDRIISELDRQIREVLAKNNASN</sequence>
<evidence type="ECO:0000250" key="1"/>
<evidence type="ECO:0000250" key="2">
    <source>
        <dbReference type="UniProtKB" id="Q7TSG1"/>
    </source>
</evidence>
<evidence type="ECO:0000250" key="3">
    <source>
        <dbReference type="UniProtKB" id="Q8N960"/>
    </source>
</evidence>
<evidence type="ECO:0000255" key="4"/>
<evidence type="ECO:0000255" key="5">
    <source>
        <dbReference type="PROSITE-ProRule" id="PRU00041"/>
    </source>
</evidence>
<evidence type="ECO:0000256" key="6">
    <source>
        <dbReference type="SAM" id="MobiDB-lite"/>
    </source>
</evidence>
<evidence type="ECO:0000303" key="7">
    <source ref="2"/>
</evidence>
<evidence type="ECO:0000305" key="8"/>
<feature type="chain" id="PRO_0000348261" description="Centrosomal protein of 120 kDa">
    <location>
        <begin position="1"/>
        <end position="987"/>
    </location>
</feature>
<feature type="domain" description="C2 1" evidence="5">
    <location>
        <begin position="1"/>
        <end position="112"/>
    </location>
</feature>
<feature type="domain" description="C2 2" evidence="5">
    <location>
        <begin position="438"/>
        <end position="567"/>
    </location>
</feature>
<feature type="region of interest" description="Disordered" evidence="6">
    <location>
        <begin position="352"/>
        <end position="408"/>
    </location>
</feature>
<feature type="region of interest" description="Disordered" evidence="6">
    <location>
        <begin position="912"/>
        <end position="937"/>
    </location>
</feature>
<feature type="coiled-coil region" evidence="4">
    <location>
        <begin position="670"/>
        <end position="919"/>
    </location>
</feature>
<feature type="compositionally biased region" description="Basic and acidic residues" evidence="6">
    <location>
        <begin position="912"/>
        <end position="926"/>
    </location>
</feature>
<feature type="modified residue" description="Phosphoserine" evidence="2">
    <location>
        <position position="936"/>
    </location>
</feature>
<feature type="splice variant" id="VSP_035122" description="In isoform 2." evidence="7">
    <location>
        <begin position="621"/>
        <end position="671"/>
    </location>
</feature>
<organism>
    <name type="scientific">Bos taurus</name>
    <name type="common">Bovine</name>
    <dbReference type="NCBI Taxonomy" id="9913"/>
    <lineage>
        <taxon>Eukaryota</taxon>
        <taxon>Metazoa</taxon>
        <taxon>Chordata</taxon>
        <taxon>Craniata</taxon>
        <taxon>Vertebrata</taxon>
        <taxon>Euteleostomi</taxon>
        <taxon>Mammalia</taxon>
        <taxon>Eutheria</taxon>
        <taxon>Laurasiatheria</taxon>
        <taxon>Artiodactyla</taxon>
        <taxon>Ruminantia</taxon>
        <taxon>Pecora</taxon>
        <taxon>Bovidae</taxon>
        <taxon>Bovinae</taxon>
        <taxon>Bos</taxon>
    </lineage>
</organism>
<dbReference type="EMBL" id="AAFC03099167">
    <property type="status" value="NOT_ANNOTATED_CDS"/>
    <property type="molecule type" value="Genomic_DNA"/>
</dbReference>
<dbReference type="EMBL" id="AAFC03125893">
    <property type="status" value="NOT_ANNOTATED_CDS"/>
    <property type="molecule type" value="Genomic_DNA"/>
</dbReference>
<dbReference type="EMBL" id="AAFC03125142">
    <property type="status" value="NOT_ANNOTATED_CDS"/>
    <property type="molecule type" value="Genomic_DNA"/>
</dbReference>
<dbReference type="EMBL" id="AAFC03099169">
    <property type="status" value="NOT_ANNOTATED_CDS"/>
    <property type="molecule type" value="Genomic_DNA"/>
</dbReference>
<dbReference type="EMBL" id="AAFC03131164">
    <property type="status" value="NOT_ANNOTATED_CDS"/>
    <property type="molecule type" value="Genomic_DNA"/>
</dbReference>
<dbReference type="EMBL" id="AAFC03126660">
    <property type="status" value="NOT_ANNOTATED_CDS"/>
    <property type="molecule type" value="Genomic_DNA"/>
</dbReference>
<dbReference type="EMBL" id="BC126531">
    <property type="protein sequence ID" value="AAI26532.1"/>
    <property type="molecule type" value="mRNA"/>
</dbReference>
<dbReference type="RefSeq" id="NP_001071468.1">
    <molecule id="A0JN62-2"/>
    <property type="nucleotide sequence ID" value="NM_001078000.2"/>
</dbReference>
<dbReference type="RefSeq" id="XP_005209165.1">
    <molecule id="A0JN62-1"/>
    <property type="nucleotide sequence ID" value="XM_005209108.5"/>
</dbReference>
<dbReference type="RefSeq" id="XP_005209166.1">
    <property type="nucleotide sequence ID" value="XM_005209109.3"/>
</dbReference>
<dbReference type="RefSeq" id="XP_010805402.1">
    <property type="nucleotide sequence ID" value="XM_010807100.2"/>
</dbReference>
<dbReference type="RefSeq" id="XP_010805403.1">
    <property type="nucleotide sequence ID" value="XM_010807101.2"/>
</dbReference>
<dbReference type="RefSeq" id="XP_059744267.1">
    <molecule id="A0JN62-1"/>
    <property type="nucleotide sequence ID" value="XM_059888284.1"/>
</dbReference>
<dbReference type="RefSeq" id="XP_059744268.1">
    <molecule id="A0JN62-1"/>
    <property type="nucleotide sequence ID" value="XM_059888285.1"/>
</dbReference>
<dbReference type="SMR" id="A0JN62"/>
<dbReference type="FunCoup" id="A0JN62">
    <property type="interactions" value="4460"/>
</dbReference>
<dbReference type="STRING" id="9913.ENSBTAP00000041320"/>
<dbReference type="PaxDb" id="9913-ENSBTAP00000041320"/>
<dbReference type="Ensembl" id="ENSBTAT00000017545.6">
    <molecule id="A0JN62-2"/>
    <property type="protein sequence ID" value="ENSBTAP00000017545.5"/>
    <property type="gene ID" value="ENSBTAG00000013184.7"/>
</dbReference>
<dbReference type="Ensembl" id="ENSBTAT00000043775.5">
    <molecule id="A0JN62-1"/>
    <property type="protein sequence ID" value="ENSBTAP00000041320.3"/>
    <property type="gene ID" value="ENSBTAG00000013184.7"/>
</dbReference>
<dbReference type="GeneID" id="534400"/>
<dbReference type="KEGG" id="bta:534400"/>
<dbReference type="CTD" id="153241"/>
<dbReference type="VEuPathDB" id="HostDB:ENSBTAG00000013184"/>
<dbReference type="eggNOG" id="ENOG502QPT0">
    <property type="taxonomic scope" value="Eukaryota"/>
</dbReference>
<dbReference type="GeneTree" id="ENSGT00390000009378"/>
<dbReference type="HOGENOM" id="CLU_012372_0_0_1"/>
<dbReference type="InParanoid" id="A0JN62"/>
<dbReference type="OMA" id="HTNQPEF"/>
<dbReference type="OrthoDB" id="332250at2759"/>
<dbReference type="TreeFam" id="TF329430"/>
<dbReference type="Proteomes" id="UP000009136">
    <property type="component" value="Chromosome 7"/>
</dbReference>
<dbReference type="Bgee" id="ENSBTAG00000013184">
    <property type="expression patterns" value="Expressed in spermatid and 108 other cell types or tissues"/>
</dbReference>
<dbReference type="GO" id="GO:0005814">
    <property type="term" value="C:centriole"/>
    <property type="evidence" value="ECO:0007669"/>
    <property type="project" value="Ensembl"/>
</dbReference>
<dbReference type="GO" id="GO:0005813">
    <property type="term" value="C:centrosome"/>
    <property type="evidence" value="ECO:0000250"/>
    <property type="project" value="UniProtKB"/>
</dbReference>
<dbReference type="GO" id="GO:0005737">
    <property type="term" value="C:cytoplasm"/>
    <property type="evidence" value="ECO:0007669"/>
    <property type="project" value="UniProtKB-KW"/>
</dbReference>
<dbReference type="GO" id="GO:0030953">
    <property type="term" value="P:astral microtubule organization"/>
    <property type="evidence" value="ECO:0007669"/>
    <property type="project" value="Ensembl"/>
</dbReference>
<dbReference type="GO" id="GO:0007098">
    <property type="term" value="P:centrosome cycle"/>
    <property type="evidence" value="ECO:0007669"/>
    <property type="project" value="Ensembl"/>
</dbReference>
<dbReference type="GO" id="GO:0021987">
    <property type="term" value="P:cerebral cortex development"/>
    <property type="evidence" value="ECO:0007669"/>
    <property type="project" value="Ensembl"/>
</dbReference>
<dbReference type="GO" id="GO:0022027">
    <property type="term" value="P:interkinetic nuclear migration"/>
    <property type="evidence" value="ECO:0000318"/>
    <property type="project" value="GO_Central"/>
</dbReference>
<dbReference type="GO" id="GO:0022008">
    <property type="term" value="P:neurogenesis"/>
    <property type="evidence" value="ECO:0007669"/>
    <property type="project" value="Ensembl"/>
</dbReference>
<dbReference type="GO" id="GO:1903724">
    <property type="term" value="P:positive regulation of centriole elongation"/>
    <property type="evidence" value="ECO:0000250"/>
    <property type="project" value="UniProtKB"/>
</dbReference>
<dbReference type="GO" id="GO:0010825">
    <property type="term" value="P:positive regulation of centrosome duplication"/>
    <property type="evidence" value="ECO:0007669"/>
    <property type="project" value="Ensembl"/>
</dbReference>
<dbReference type="GO" id="GO:0045724">
    <property type="term" value="P:positive regulation of cilium assembly"/>
    <property type="evidence" value="ECO:0007669"/>
    <property type="project" value="Ensembl"/>
</dbReference>
<dbReference type="GO" id="GO:1904951">
    <property type="term" value="P:positive regulation of establishment of protein localization"/>
    <property type="evidence" value="ECO:0000250"/>
    <property type="project" value="UniProtKB"/>
</dbReference>
<dbReference type="CDD" id="cd00030">
    <property type="entry name" value="C2"/>
    <property type="match status" value="1"/>
</dbReference>
<dbReference type="FunFam" id="2.60.40.150:FF:000112">
    <property type="entry name" value="centrosomal protein of 120 kDa isoform X1"/>
    <property type="match status" value="1"/>
</dbReference>
<dbReference type="Gene3D" id="2.60.40.150">
    <property type="entry name" value="C2 domain"/>
    <property type="match status" value="1"/>
</dbReference>
<dbReference type="InterPro" id="IPR000008">
    <property type="entry name" value="C2_dom"/>
</dbReference>
<dbReference type="InterPro" id="IPR035892">
    <property type="entry name" value="C2_domain_sf"/>
</dbReference>
<dbReference type="InterPro" id="IPR039893">
    <property type="entry name" value="CEP120-like"/>
</dbReference>
<dbReference type="InterPro" id="IPR022136">
    <property type="entry name" value="DUF3668"/>
</dbReference>
<dbReference type="PANTHER" id="PTHR21574">
    <property type="entry name" value="CENTROSOMAL PROTEIN OF 120 KDA"/>
    <property type="match status" value="1"/>
</dbReference>
<dbReference type="PANTHER" id="PTHR21574:SF0">
    <property type="entry name" value="CENTROSOMAL PROTEIN OF 120 KDA"/>
    <property type="match status" value="1"/>
</dbReference>
<dbReference type="Pfam" id="PF00168">
    <property type="entry name" value="C2"/>
    <property type="match status" value="2"/>
</dbReference>
<dbReference type="Pfam" id="PF12416">
    <property type="entry name" value="DUF3668"/>
    <property type="match status" value="1"/>
</dbReference>
<dbReference type="SUPFAM" id="SSF49562">
    <property type="entry name" value="C2 domain (Calcium/lipid-binding domain, CaLB)"/>
    <property type="match status" value="1"/>
</dbReference>
<dbReference type="PROSITE" id="PS50004">
    <property type="entry name" value="C2"/>
    <property type="match status" value="2"/>
</dbReference>
<proteinExistence type="evidence at transcript level"/>
<accession>A0JN62</accession>
<gene>
    <name type="primary">CEP120</name>
    <name type="synonym">CCDC100</name>
</gene>
<name>CE120_BOVIN</name>
<keyword id="KW-0025">Alternative splicing</keyword>
<keyword id="KW-0175">Coiled coil</keyword>
<keyword id="KW-0963">Cytoplasm</keyword>
<keyword id="KW-0206">Cytoskeleton</keyword>
<keyword id="KW-0597">Phosphoprotein</keyword>
<keyword id="KW-1185">Reference proteome</keyword>
<keyword id="KW-0677">Repeat</keyword>
<protein>
    <recommendedName>
        <fullName>Centrosomal protein of 120 kDa</fullName>
        <shortName>Cep120</shortName>
    </recommendedName>
    <alternativeName>
        <fullName>Coiled-coil domain-containing protein 100</fullName>
    </alternativeName>
</protein>
<reference key="1">
    <citation type="journal article" date="2009" name="Science">
        <title>The genome sequence of taurine cattle: a window to ruminant biology and evolution.</title>
        <authorList>
            <consortium name="The bovine genome sequencing and analysis consortium"/>
        </authorList>
    </citation>
    <scope>NUCLEOTIDE SEQUENCE [LARGE SCALE GENOMIC DNA]</scope>
    <source>
        <strain>Hereford</strain>
    </source>
</reference>
<reference key="2">
    <citation type="submission" date="2006-10" db="EMBL/GenBank/DDBJ databases">
        <authorList>
            <consortium name="NIH - Mammalian Gene Collection (MGC) project"/>
        </authorList>
    </citation>
    <scope>NUCLEOTIDE SEQUENCE [LARGE SCALE MRNA] (ISOFORM 2)</scope>
    <source>
        <strain>Hereford</strain>
        <tissue>Thymus</tissue>
    </source>
</reference>
<comment type="function">
    <text evidence="2 3">Plays a role in the microtubule-dependent coupling of the nucleus and the centrosome. Involved in the processes that regulate centrosome-mediated interkinetic nuclear migration (INM) of neural progenitors and for proper positioning of neurons during brain development. Also implicated in the migration and selfrenewal of neural progenitors. May play a role in centriole duplication during mitosis (By similarity). Required for the recruitment of CEP295 to the proximal end of new-born centrioles at the centriolar microtubule wall during early S phase in a PLK4-dependent manner (By similarity).</text>
</comment>
<comment type="subunit">
    <text evidence="1">Interacts with TACC2 and TACC3. Interacts with CCDC52.</text>
</comment>
<comment type="subcellular location">
    <subcellularLocation>
        <location evidence="3">Cytoplasm</location>
        <location evidence="3">Cytoskeleton</location>
        <location evidence="3">Microtubule organizing center</location>
        <location evidence="3">Centrosome</location>
    </subcellularLocation>
    <text evidence="2">Regulates the localization of TACC3 to the centrosome in neural progenitors in vivo.</text>
</comment>
<comment type="alternative products">
    <event type="alternative splicing"/>
    <isoform>
        <id>A0JN62-1</id>
        <name>1</name>
        <sequence type="displayed"/>
    </isoform>
    <isoform>
        <id>A0JN62-2</id>
        <name>2</name>
        <sequence type="described" ref="VSP_035122"/>
    </isoform>
</comment>
<comment type="similarity">
    <text evidence="8">Belongs to the CEP120 family.</text>
</comment>